<name>MIC60_NEUCR</name>
<protein>
    <recommendedName>
        <fullName>MICOS complex subunit mic60</fullName>
    </recommendedName>
    <alternativeName>
        <fullName>Mitofilin</fullName>
    </alternativeName>
</protein>
<comment type="function">
    <text evidence="1">Component of the MICOS complex, a large protein complex of the mitochondrial inner membrane that plays crucial roles in the maintenance of crista junctions, inner membrane architecture, and formation of contact sites to the outer membrane. Plays a role in keeping cristae membranes connected to the inner boundary membrane. Also promotes protein import via the mitochondrial intermembrane space assembly (MIA) pathway (By similarity).</text>
</comment>
<comment type="subunit">
    <text evidence="1">Component of the mitochondrial contact site and cristae organizing system (MICOS) complex.</text>
</comment>
<comment type="subcellular location">
    <subcellularLocation>
        <location evidence="1">Mitochondrion inner membrane</location>
        <topology evidence="1">Single-pass membrane protein</topology>
    </subcellularLocation>
</comment>
<comment type="similarity">
    <text evidence="4">Belongs to the MICOS complex subunit Mic60 family.</text>
</comment>
<proteinExistence type="inferred from homology"/>
<gene>
    <name type="primary">mic60</name>
    <name type="ORF">B13C5.200</name>
    <name type="ORF">NCU00894</name>
</gene>
<organism>
    <name type="scientific">Neurospora crassa (strain ATCC 24698 / 74-OR23-1A / CBS 708.71 / DSM 1257 / FGSC 987)</name>
    <dbReference type="NCBI Taxonomy" id="367110"/>
    <lineage>
        <taxon>Eukaryota</taxon>
        <taxon>Fungi</taxon>
        <taxon>Dikarya</taxon>
        <taxon>Ascomycota</taxon>
        <taxon>Pezizomycotina</taxon>
        <taxon>Sordariomycetes</taxon>
        <taxon>Sordariomycetidae</taxon>
        <taxon>Sordariales</taxon>
        <taxon>Sordariaceae</taxon>
        <taxon>Neurospora</taxon>
    </lineage>
</organism>
<dbReference type="EMBL" id="BX842682">
    <property type="protein sequence ID" value="CAE82004.1"/>
    <property type="molecule type" value="Genomic_DNA"/>
</dbReference>
<dbReference type="EMBL" id="CM002236">
    <property type="protein sequence ID" value="EAA35574.1"/>
    <property type="molecule type" value="Genomic_DNA"/>
</dbReference>
<dbReference type="RefSeq" id="XP_964810.1">
    <property type="nucleotide sequence ID" value="XM_959717.2"/>
</dbReference>
<dbReference type="SMR" id="Q7SFD8"/>
<dbReference type="FunCoup" id="Q7SFD8">
    <property type="interactions" value="176"/>
</dbReference>
<dbReference type="STRING" id="367110.Q7SFD8"/>
<dbReference type="PaxDb" id="5141-EFNCRP00000000742"/>
<dbReference type="EnsemblFungi" id="EAA35574">
    <property type="protein sequence ID" value="EAA35574"/>
    <property type="gene ID" value="NCU00894"/>
</dbReference>
<dbReference type="GeneID" id="3880934"/>
<dbReference type="KEGG" id="ncr:NCU00894"/>
<dbReference type="VEuPathDB" id="FungiDB:NCU00894"/>
<dbReference type="HOGENOM" id="CLU_008024_1_2_1"/>
<dbReference type="InParanoid" id="Q7SFD8"/>
<dbReference type="OrthoDB" id="10261039at2759"/>
<dbReference type="Proteomes" id="UP000001805">
    <property type="component" value="Chromosome 1, Linkage Group I"/>
</dbReference>
<dbReference type="GO" id="GO:0061617">
    <property type="term" value="C:MICOS complex"/>
    <property type="evidence" value="ECO:0000318"/>
    <property type="project" value="GO_Central"/>
</dbReference>
<dbReference type="GO" id="GO:0042407">
    <property type="term" value="P:cristae formation"/>
    <property type="evidence" value="ECO:0000318"/>
    <property type="project" value="GO_Central"/>
</dbReference>
<dbReference type="InterPro" id="IPR019133">
    <property type="entry name" value="MIC60"/>
</dbReference>
<dbReference type="PANTHER" id="PTHR15415:SF7">
    <property type="entry name" value="MICOS COMPLEX SUBUNIT MIC60"/>
    <property type="match status" value="1"/>
</dbReference>
<dbReference type="PANTHER" id="PTHR15415">
    <property type="entry name" value="MITOFILIN"/>
    <property type="match status" value="1"/>
</dbReference>
<dbReference type="Pfam" id="PF09731">
    <property type="entry name" value="Mitofilin"/>
    <property type="match status" value="1"/>
</dbReference>
<keyword id="KW-0175">Coiled coil</keyword>
<keyword id="KW-0472">Membrane</keyword>
<keyword id="KW-0496">Mitochondrion</keyword>
<keyword id="KW-0999">Mitochondrion inner membrane</keyword>
<keyword id="KW-1185">Reference proteome</keyword>
<keyword id="KW-0809">Transit peptide</keyword>
<keyword id="KW-0812">Transmembrane</keyword>
<keyword id="KW-1133">Transmembrane helix</keyword>
<evidence type="ECO:0000250" key="1"/>
<evidence type="ECO:0000255" key="2"/>
<evidence type="ECO:0000256" key="3">
    <source>
        <dbReference type="SAM" id="MobiDB-lite"/>
    </source>
</evidence>
<evidence type="ECO:0000305" key="4"/>
<feature type="transit peptide" description="Mitochondrion" evidence="2">
    <location>
        <begin position="1"/>
        <end position="48"/>
    </location>
</feature>
<feature type="chain" id="PRO_0000406662" description="MICOS complex subunit mic60">
    <location>
        <begin position="49"/>
        <end position="672"/>
    </location>
</feature>
<feature type="topological domain" description="Mitochondrial matrix" evidence="2">
    <location>
        <begin position="49"/>
        <end position="125"/>
    </location>
</feature>
<feature type="transmembrane region" description="Helical" evidence="2">
    <location>
        <begin position="126"/>
        <end position="148"/>
    </location>
</feature>
<feature type="topological domain" description="Mitochondrial intermembrane" evidence="2">
    <location>
        <begin position="149"/>
        <end position="672"/>
    </location>
</feature>
<feature type="region of interest" description="Disordered" evidence="3">
    <location>
        <begin position="43"/>
        <end position="112"/>
    </location>
</feature>
<feature type="region of interest" description="Disordered" evidence="3">
    <location>
        <begin position="189"/>
        <end position="305"/>
    </location>
</feature>
<feature type="coiled-coil region" evidence="2">
    <location>
        <begin position="403"/>
        <end position="489"/>
    </location>
</feature>
<feature type="compositionally biased region" description="Low complexity" evidence="3">
    <location>
        <begin position="58"/>
        <end position="67"/>
    </location>
</feature>
<feature type="compositionally biased region" description="Low complexity" evidence="3">
    <location>
        <begin position="75"/>
        <end position="85"/>
    </location>
</feature>
<feature type="compositionally biased region" description="Pro residues" evidence="3">
    <location>
        <begin position="86"/>
        <end position="95"/>
    </location>
</feature>
<feature type="compositionally biased region" description="Low complexity" evidence="3">
    <location>
        <begin position="96"/>
        <end position="107"/>
    </location>
</feature>
<feature type="compositionally biased region" description="Basic and acidic residues" evidence="3">
    <location>
        <begin position="247"/>
        <end position="256"/>
    </location>
</feature>
<feature type="compositionally biased region" description="Low complexity" evidence="3">
    <location>
        <begin position="257"/>
        <end position="281"/>
    </location>
</feature>
<accession>Q7SFD8</accession>
<sequence length="672" mass="73443">MLRTSLRSVRALGSRPSAAVAGRQWQATVVRRAAVSGQRFFADDKKPVVPEPSQPAVLPASETLTSPSTPPPASPQVEPTSTVPPETTPLTPPTPEATVIPPVAEEPVVPPTLPTPRKKKGFFRRLRNFFLSLTILGAIAFGGGVYYSRINDAFHDFFTEYIPYGEQAVLYLEELDFKKRFPDVVSRVTGRPRDSGEQVKVPAQSGASWRVASGGEPAGRQSSSIKKAGAAAQDAVPKSEPAVVAAAKEDTAELPKTEATTTATPAEPAPAPAATDASGTPVKKPFKAPEVDEPSRWPPASPIDPLTVNGATDPIVQDLVKMLNDVITVINHDNANEKYAPTICKAKNELSKVADKINEMKAKVEADAAKQVKARVDGFDKAANELVSRVESAMAAQEAAWRREFEEEITRLKKSYDEKVHLIQDREHQIAEEKLNNRLLEQAIQLQRQFTENIKKHVEQERDGRLGKLNELHKAVAELERLTSGLNEVVDTNLRTQQLHVAVDAVRASLEDAHHPRPFIKELVALKEIAADDPVVDAAIASINPTAYQRGIPTTAELIDRFRRVATEVRKASLLPEDAGVASHASSYVLSKLMFKKEGLAAGDDVESILTRTQTYLEEGDLDNAAREMNGLKGWAKTLSRDWLGEVRKVLEVQQALDVIQAEARLQSLRVE</sequence>
<reference key="1">
    <citation type="journal article" date="2003" name="Nucleic Acids Res.">
        <title>What's in the genome of a filamentous fungus? Analysis of the Neurospora genome sequence.</title>
        <authorList>
            <person name="Mannhaupt G."/>
            <person name="Montrone C."/>
            <person name="Haase D."/>
            <person name="Mewes H.-W."/>
            <person name="Aign V."/>
            <person name="Hoheisel J.D."/>
            <person name="Fartmann B."/>
            <person name="Nyakatura G."/>
            <person name="Kempken F."/>
            <person name="Maier J."/>
            <person name="Schulte U."/>
        </authorList>
    </citation>
    <scope>NUCLEOTIDE SEQUENCE [LARGE SCALE GENOMIC DNA]</scope>
    <source>
        <strain>ATCC 24698 / 74-OR23-1A / CBS 708.71 / DSM 1257 / FGSC 987</strain>
    </source>
</reference>
<reference key="2">
    <citation type="journal article" date="2003" name="Nature">
        <title>The genome sequence of the filamentous fungus Neurospora crassa.</title>
        <authorList>
            <person name="Galagan J.E."/>
            <person name="Calvo S.E."/>
            <person name="Borkovich K.A."/>
            <person name="Selker E.U."/>
            <person name="Read N.D."/>
            <person name="Jaffe D.B."/>
            <person name="FitzHugh W."/>
            <person name="Ma L.-J."/>
            <person name="Smirnov S."/>
            <person name="Purcell S."/>
            <person name="Rehman B."/>
            <person name="Elkins T."/>
            <person name="Engels R."/>
            <person name="Wang S."/>
            <person name="Nielsen C.B."/>
            <person name="Butler J."/>
            <person name="Endrizzi M."/>
            <person name="Qui D."/>
            <person name="Ianakiev P."/>
            <person name="Bell-Pedersen D."/>
            <person name="Nelson M.A."/>
            <person name="Werner-Washburne M."/>
            <person name="Selitrennikoff C.P."/>
            <person name="Kinsey J.A."/>
            <person name="Braun E.L."/>
            <person name="Zelter A."/>
            <person name="Schulte U."/>
            <person name="Kothe G.O."/>
            <person name="Jedd G."/>
            <person name="Mewes H.-W."/>
            <person name="Staben C."/>
            <person name="Marcotte E."/>
            <person name="Greenberg D."/>
            <person name="Roy A."/>
            <person name="Foley K."/>
            <person name="Naylor J."/>
            <person name="Stange-Thomann N."/>
            <person name="Barrett R."/>
            <person name="Gnerre S."/>
            <person name="Kamal M."/>
            <person name="Kamvysselis M."/>
            <person name="Mauceli E.W."/>
            <person name="Bielke C."/>
            <person name="Rudd S."/>
            <person name="Frishman D."/>
            <person name="Krystofova S."/>
            <person name="Rasmussen C."/>
            <person name="Metzenberg R.L."/>
            <person name="Perkins D.D."/>
            <person name="Kroken S."/>
            <person name="Cogoni C."/>
            <person name="Macino G."/>
            <person name="Catcheside D.E.A."/>
            <person name="Li W."/>
            <person name="Pratt R.J."/>
            <person name="Osmani S.A."/>
            <person name="DeSouza C.P.C."/>
            <person name="Glass N.L."/>
            <person name="Orbach M.J."/>
            <person name="Berglund J.A."/>
            <person name="Voelker R."/>
            <person name="Yarden O."/>
            <person name="Plamann M."/>
            <person name="Seiler S."/>
            <person name="Dunlap J.C."/>
            <person name="Radford A."/>
            <person name="Aramayo R."/>
            <person name="Natvig D.O."/>
            <person name="Alex L.A."/>
            <person name="Mannhaupt G."/>
            <person name="Ebbole D.J."/>
            <person name="Freitag M."/>
            <person name="Paulsen I."/>
            <person name="Sachs M.S."/>
            <person name="Lander E.S."/>
            <person name="Nusbaum C."/>
            <person name="Birren B.W."/>
        </authorList>
    </citation>
    <scope>NUCLEOTIDE SEQUENCE [LARGE SCALE GENOMIC DNA]</scope>
    <source>
        <strain>ATCC 24698 / 74-OR23-1A / CBS 708.71 / DSM 1257 / FGSC 987</strain>
    </source>
</reference>